<gene>
    <name evidence="1" type="primary">lacZ</name>
    <name type="ordered locus">SSON_0299</name>
</gene>
<evidence type="ECO:0000255" key="1">
    <source>
        <dbReference type="HAMAP-Rule" id="MF_01687"/>
    </source>
</evidence>
<dbReference type="EC" id="3.2.1.23" evidence="1"/>
<dbReference type="EMBL" id="CP000038">
    <property type="protein sequence ID" value="AAZ87079.1"/>
    <property type="molecule type" value="Genomic_DNA"/>
</dbReference>
<dbReference type="RefSeq" id="WP_000605342.1">
    <property type="nucleotide sequence ID" value="NC_007384.1"/>
</dbReference>
<dbReference type="SMR" id="Q3Z583"/>
<dbReference type="CAZy" id="GH2">
    <property type="family name" value="Glycoside Hydrolase Family 2"/>
</dbReference>
<dbReference type="KEGG" id="ssn:SSON_0299"/>
<dbReference type="HOGENOM" id="CLU_002346_0_2_6"/>
<dbReference type="Proteomes" id="UP000002529">
    <property type="component" value="Chromosome"/>
</dbReference>
<dbReference type="GO" id="GO:0009341">
    <property type="term" value="C:beta-galactosidase complex"/>
    <property type="evidence" value="ECO:0007669"/>
    <property type="project" value="InterPro"/>
</dbReference>
<dbReference type="GO" id="GO:0004565">
    <property type="term" value="F:beta-galactosidase activity"/>
    <property type="evidence" value="ECO:0007669"/>
    <property type="project" value="UniProtKB-EC"/>
</dbReference>
<dbReference type="GO" id="GO:0030246">
    <property type="term" value="F:carbohydrate binding"/>
    <property type="evidence" value="ECO:0007669"/>
    <property type="project" value="InterPro"/>
</dbReference>
<dbReference type="GO" id="GO:0000287">
    <property type="term" value="F:magnesium ion binding"/>
    <property type="evidence" value="ECO:0007669"/>
    <property type="project" value="UniProtKB-UniRule"/>
</dbReference>
<dbReference type="GO" id="GO:0005990">
    <property type="term" value="P:lactose catabolic process"/>
    <property type="evidence" value="ECO:0007669"/>
    <property type="project" value="TreeGrafter"/>
</dbReference>
<dbReference type="FunFam" id="2.60.120.260:FF:000058">
    <property type="entry name" value="Beta-galactosidase"/>
    <property type="match status" value="1"/>
</dbReference>
<dbReference type="FunFam" id="2.60.40.10:FF:000680">
    <property type="entry name" value="Beta-galactosidase"/>
    <property type="match status" value="1"/>
</dbReference>
<dbReference type="FunFam" id="2.60.40.10:FF:000850">
    <property type="entry name" value="Beta-galactosidase"/>
    <property type="match status" value="1"/>
</dbReference>
<dbReference type="FunFam" id="2.70.98.10:FF:000006">
    <property type="entry name" value="Beta-galactosidase"/>
    <property type="match status" value="1"/>
</dbReference>
<dbReference type="FunFam" id="3.20.20.80:FF:000018">
    <property type="entry name" value="Beta-galactosidase"/>
    <property type="match status" value="1"/>
</dbReference>
<dbReference type="Gene3D" id="2.70.98.10">
    <property type="match status" value="1"/>
</dbReference>
<dbReference type="Gene3D" id="2.60.120.260">
    <property type="entry name" value="Galactose-binding domain-like"/>
    <property type="match status" value="1"/>
</dbReference>
<dbReference type="Gene3D" id="3.20.20.80">
    <property type="entry name" value="Glycosidases"/>
    <property type="match status" value="1"/>
</dbReference>
<dbReference type="Gene3D" id="2.60.40.10">
    <property type="entry name" value="Immunoglobulins"/>
    <property type="match status" value="2"/>
</dbReference>
<dbReference type="HAMAP" id="MF_01687">
    <property type="entry name" value="Beta_gal"/>
    <property type="match status" value="1"/>
</dbReference>
<dbReference type="InterPro" id="IPR004199">
    <property type="entry name" value="B-gal_small/dom_5"/>
</dbReference>
<dbReference type="InterPro" id="IPR050347">
    <property type="entry name" value="Bact_Beta-galactosidase"/>
</dbReference>
<dbReference type="InterPro" id="IPR036156">
    <property type="entry name" value="Beta-gal/glucu_dom_sf"/>
</dbReference>
<dbReference type="InterPro" id="IPR011013">
    <property type="entry name" value="Gal_mutarotase_sf_dom"/>
</dbReference>
<dbReference type="InterPro" id="IPR008979">
    <property type="entry name" value="Galactose-bd-like_sf"/>
</dbReference>
<dbReference type="InterPro" id="IPR014718">
    <property type="entry name" value="GH-type_carb-bd"/>
</dbReference>
<dbReference type="InterPro" id="IPR006101">
    <property type="entry name" value="Glyco_hydro_2"/>
</dbReference>
<dbReference type="InterPro" id="IPR023232">
    <property type="entry name" value="Glyco_hydro_2_AS"/>
</dbReference>
<dbReference type="InterPro" id="IPR023933">
    <property type="entry name" value="Glyco_hydro_2_beta_Galsidase"/>
</dbReference>
<dbReference type="InterPro" id="IPR006103">
    <property type="entry name" value="Glyco_hydro_2_cat"/>
</dbReference>
<dbReference type="InterPro" id="IPR023230">
    <property type="entry name" value="Glyco_hydro_2_CS"/>
</dbReference>
<dbReference type="InterPro" id="IPR006102">
    <property type="entry name" value="Glyco_hydro_2_Ig-like"/>
</dbReference>
<dbReference type="InterPro" id="IPR006104">
    <property type="entry name" value="Glyco_hydro_2_N"/>
</dbReference>
<dbReference type="InterPro" id="IPR017853">
    <property type="entry name" value="Glycoside_hydrolase_SF"/>
</dbReference>
<dbReference type="InterPro" id="IPR013783">
    <property type="entry name" value="Ig-like_fold"/>
</dbReference>
<dbReference type="InterPro" id="IPR032312">
    <property type="entry name" value="LacZ_4"/>
</dbReference>
<dbReference type="NCBIfam" id="NF007074">
    <property type="entry name" value="PRK09525.1"/>
    <property type="match status" value="1"/>
</dbReference>
<dbReference type="PANTHER" id="PTHR46323">
    <property type="entry name" value="BETA-GALACTOSIDASE"/>
    <property type="match status" value="1"/>
</dbReference>
<dbReference type="PANTHER" id="PTHR46323:SF2">
    <property type="entry name" value="BETA-GALACTOSIDASE"/>
    <property type="match status" value="1"/>
</dbReference>
<dbReference type="Pfam" id="PF02929">
    <property type="entry name" value="Bgal_small_N"/>
    <property type="match status" value="1"/>
</dbReference>
<dbReference type="Pfam" id="PF00703">
    <property type="entry name" value="Glyco_hydro_2"/>
    <property type="match status" value="1"/>
</dbReference>
<dbReference type="Pfam" id="PF02836">
    <property type="entry name" value="Glyco_hydro_2_C"/>
    <property type="match status" value="1"/>
</dbReference>
<dbReference type="Pfam" id="PF02837">
    <property type="entry name" value="Glyco_hydro_2_N"/>
    <property type="match status" value="1"/>
</dbReference>
<dbReference type="Pfam" id="PF16353">
    <property type="entry name" value="LacZ_4"/>
    <property type="match status" value="1"/>
</dbReference>
<dbReference type="PRINTS" id="PR00132">
    <property type="entry name" value="GLHYDRLASE2"/>
</dbReference>
<dbReference type="SMART" id="SM01038">
    <property type="entry name" value="Bgal_small_N"/>
    <property type="match status" value="1"/>
</dbReference>
<dbReference type="SUPFAM" id="SSF51445">
    <property type="entry name" value="(Trans)glycosidases"/>
    <property type="match status" value="1"/>
</dbReference>
<dbReference type="SUPFAM" id="SSF49303">
    <property type="entry name" value="beta-Galactosidase/glucuronidase domain"/>
    <property type="match status" value="2"/>
</dbReference>
<dbReference type="SUPFAM" id="SSF74650">
    <property type="entry name" value="Galactose mutarotase-like"/>
    <property type="match status" value="1"/>
</dbReference>
<dbReference type="SUPFAM" id="SSF49785">
    <property type="entry name" value="Galactose-binding domain-like"/>
    <property type="match status" value="1"/>
</dbReference>
<dbReference type="PROSITE" id="PS00719">
    <property type="entry name" value="GLYCOSYL_HYDROL_F2_1"/>
    <property type="match status" value="1"/>
</dbReference>
<dbReference type="PROSITE" id="PS00608">
    <property type="entry name" value="GLYCOSYL_HYDROL_F2_2"/>
    <property type="match status" value="1"/>
</dbReference>
<protein>
    <recommendedName>
        <fullName evidence="1">Beta-galactosidase</fullName>
        <shortName evidence="1">Beta-gal</shortName>
        <ecNumber evidence="1">3.2.1.23</ecNumber>
    </recommendedName>
    <alternativeName>
        <fullName evidence="1">Lactase</fullName>
    </alternativeName>
</protein>
<sequence>MIMITDSLAVVLQRRDWENPGVTQLNRLAAHPPFASWRNSEEARTDRPSQQLRSLNGEWRFAWFPAPEAVPESWLECDLPEADTVVVPSNWQMHGYDAPIYTNVTYPITVNPPFVPAENPTGCYSLTFNIDESWLQEGQTRIIFDGVNSAFHLWCNGRWVGYGQDSRLPSEFDLSAFLRAGKNRLAVMVLRWSDGSYLEDQDMWRMSGIFRDVSLLHKPSTQISDFHVATHFNDDFSRAVLEAEVQMYGELRDELRVTVSLWQGETQVASGTAPFGGEIIDERGGYADRVTLRLNVENPALWSAEIPNLYRAVVELHTDDGTLIEAEACDVGFREVRIENGLLLLNGKPLLIRGVNRHEHHPLHGQVMDEQTMVQDILLMKQNNFNAVRCSHYPNHPLWYTLCDRFGLYVVDEANIETHGMVPMNRLTDDPRWLPAMSERVTRMVQRDRNHPSVIIWSLGNESGHGANHDALYRWIKSVDPSRPVQYEGGGADTTATDIICPMYARVDEDQPFPAVPKWSIKKWLSLPGETRPLILCEYAHAMGNSLGGFAKYWQAFRQYPRLQGGFVWDWVDQSLIKYDENGNPWSAYGGDFGDTPNDRQFCMNGLVFADRTPHPALTEAKHQQQFFQFRLSGQTIEVTSEYLFRHSDNELLHWSVALDGKPLASGEMPLDVAPQDKQLIELPELPQPESAGQLWLTVHVVQPNATAWSEAGHISAWQQWRLAENLSVTLPAAPHAIPQLTTSETDFCIELGNKRWQFNRQSGFLSQMWIGAEKQLLTPLRDQFTRAPLDNDIGVSEATRIDPNAWVERWKAAGHYQAEAALLQCTADTLADAVLITTAHAWQHQGKTLFISRKTYRIDGSGQMAITVDVEVASDTPHPARIGLTCQLAQVAERVNWLGLGPQENYPDRLTAACFDRWDLPLSDMYTPYVFPSENGLRCGTRELNYGPHQWRGDFQFNISRYSQQQLMETSHRHLLHAEEGTWLNIDGFHMGIGGDDSWSPSVSAEFQLSAGSYHYQLVWCQK</sequence>
<feature type="chain" id="PRO_0000367010" description="Beta-galactosidase">
    <location>
        <begin position="1"/>
        <end position="1024"/>
    </location>
</feature>
<feature type="active site" description="Proton donor" evidence="1">
    <location>
        <position position="462"/>
    </location>
</feature>
<feature type="active site" description="Nucleophile" evidence="1">
    <location>
        <position position="538"/>
    </location>
</feature>
<feature type="binding site" evidence="1">
    <location>
        <position position="103"/>
    </location>
    <ligand>
        <name>substrate</name>
    </ligand>
</feature>
<feature type="binding site" evidence="1">
    <location>
        <position position="202"/>
    </location>
    <ligand>
        <name>Na(+)</name>
        <dbReference type="ChEBI" id="CHEBI:29101"/>
    </ligand>
</feature>
<feature type="binding site" evidence="1">
    <location>
        <position position="202"/>
    </location>
    <ligand>
        <name>substrate</name>
    </ligand>
</feature>
<feature type="binding site" evidence="1">
    <location>
        <position position="417"/>
    </location>
    <ligand>
        <name>Mg(2+)</name>
        <dbReference type="ChEBI" id="CHEBI:18420"/>
        <label>1</label>
    </ligand>
</feature>
<feature type="binding site" evidence="1">
    <location>
        <position position="419"/>
    </location>
    <ligand>
        <name>Mg(2+)</name>
        <dbReference type="ChEBI" id="CHEBI:18420"/>
        <label>1</label>
    </ligand>
</feature>
<feature type="binding site" evidence="1">
    <location>
        <position position="462"/>
    </location>
    <ligand>
        <name>Mg(2+)</name>
        <dbReference type="ChEBI" id="CHEBI:18420"/>
        <label>1</label>
    </ligand>
</feature>
<feature type="binding site" evidence="1">
    <location>
        <position position="462"/>
    </location>
    <ligand>
        <name>substrate</name>
    </ligand>
</feature>
<feature type="binding site" evidence="1">
    <location>
        <begin position="538"/>
        <end position="541"/>
    </location>
    <ligand>
        <name>substrate</name>
    </ligand>
</feature>
<feature type="binding site" evidence="1">
    <location>
        <position position="598"/>
    </location>
    <ligand>
        <name>Mg(2+)</name>
        <dbReference type="ChEBI" id="CHEBI:18420"/>
        <label>2</label>
    </ligand>
</feature>
<feature type="binding site" evidence="1">
    <location>
        <position position="602"/>
    </location>
    <ligand>
        <name>Na(+)</name>
        <dbReference type="ChEBI" id="CHEBI:29101"/>
    </ligand>
</feature>
<feature type="binding site" evidence="1">
    <location>
        <position position="605"/>
    </location>
    <ligand>
        <name>Na(+)</name>
        <dbReference type="ChEBI" id="CHEBI:29101"/>
    </ligand>
</feature>
<feature type="binding site" evidence="1">
    <location>
        <position position="605"/>
    </location>
    <ligand>
        <name>substrate</name>
    </ligand>
</feature>
<feature type="binding site" evidence="1">
    <location>
        <position position="1000"/>
    </location>
    <ligand>
        <name>substrate</name>
    </ligand>
</feature>
<feature type="site" description="Transition state stabilizer" evidence="1">
    <location>
        <position position="358"/>
    </location>
</feature>
<feature type="site" description="Transition state stabilizer" evidence="1">
    <location>
        <position position="392"/>
    </location>
</feature>
<comment type="catalytic activity">
    <reaction evidence="1">
        <text>Hydrolysis of terminal non-reducing beta-D-galactose residues in beta-D-galactosides.</text>
        <dbReference type="EC" id="3.2.1.23"/>
    </reaction>
</comment>
<comment type="cofactor">
    <cofactor evidence="1">
        <name>Mg(2+)</name>
        <dbReference type="ChEBI" id="CHEBI:18420"/>
    </cofactor>
    <text evidence="1">Binds 2 magnesium ions per monomer.</text>
</comment>
<comment type="cofactor">
    <cofactor evidence="1">
        <name>Na(+)</name>
        <dbReference type="ChEBI" id="CHEBI:29101"/>
    </cofactor>
    <text evidence="1">Binds 1 sodium ion per monomer.</text>
</comment>
<comment type="subunit">
    <text evidence="1">Homotetramer.</text>
</comment>
<comment type="similarity">
    <text evidence="1">Belongs to the glycosyl hydrolase 2 family.</text>
</comment>
<keyword id="KW-0326">Glycosidase</keyword>
<keyword id="KW-0378">Hydrolase</keyword>
<keyword id="KW-0460">Magnesium</keyword>
<keyword id="KW-0479">Metal-binding</keyword>
<keyword id="KW-1185">Reference proteome</keyword>
<keyword id="KW-0915">Sodium</keyword>
<name>BGAL_SHISS</name>
<organism>
    <name type="scientific">Shigella sonnei (strain Ss046)</name>
    <dbReference type="NCBI Taxonomy" id="300269"/>
    <lineage>
        <taxon>Bacteria</taxon>
        <taxon>Pseudomonadati</taxon>
        <taxon>Pseudomonadota</taxon>
        <taxon>Gammaproteobacteria</taxon>
        <taxon>Enterobacterales</taxon>
        <taxon>Enterobacteriaceae</taxon>
        <taxon>Shigella</taxon>
    </lineage>
</organism>
<accession>Q3Z583</accession>
<reference key="1">
    <citation type="journal article" date="2005" name="Nucleic Acids Res.">
        <title>Genome dynamics and diversity of Shigella species, the etiologic agents of bacillary dysentery.</title>
        <authorList>
            <person name="Yang F."/>
            <person name="Yang J."/>
            <person name="Zhang X."/>
            <person name="Chen L."/>
            <person name="Jiang Y."/>
            <person name="Yan Y."/>
            <person name="Tang X."/>
            <person name="Wang J."/>
            <person name="Xiong Z."/>
            <person name="Dong J."/>
            <person name="Xue Y."/>
            <person name="Zhu Y."/>
            <person name="Xu X."/>
            <person name="Sun L."/>
            <person name="Chen S."/>
            <person name="Nie H."/>
            <person name="Peng J."/>
            <person name="Xu J."/>
            <person name="Wang Y."/>
            <person name="Yuan Z."/>
            <person name="Wen Y."/>
            <person name="Yao Z."/>
            <person name="Shen Y."/>
            <person name="Qiang B."/>
            <person name="Hou Y."/>
            <person name="Yu J."/>
            <person name="Jin Q."/>
        </authorList>
    </citation>
    <scope>NUCLEOTIDE SEQUENCE [LARGE SCALE GENOMIC DNA]</scope>
    <source>
        <strain>Ss046</strain>
    </source>
</reference>
<proteinExistence type="inferred from homology"/>